<comment type="function">
    <text evidence="1">Catalyzes the reversible reaction in which hydroxymethyl group from 5,10-methylenetetrahydrofolate is transferred onto alpha-ketoisovalerate to form ketopantoate.</text>
</comment>
<comment type="catalytic activity">
    <reaction evidence="1">
        <text>3-methyl-2-oxobutanoate + (6R)-5,10-methylene-5,6,7,8-tetrahydrofolate + H2O = 2-dehydropantoate + (6S)-5,6,7,8-tetrahydrofolate</text>
        <dbReference type="Rhea" id="RHEA:11824"/>
        <dbReference type="ChEBI" id="CHEBI:11561"/>
        <dbReference type="ChEBI" id="CHEBI:11851"/>
        <dbReference type="ChEBI" id="CHEBI:15377"/>
        <dbReference type="ChEBI" id="CHEBI:15636"/>
        <dbReference type="ChEBI" id="CHEBI:57453"/>
        <dbReference type="EC" id="2.1.2.11"/>
    </reaction>
</comment>
<comment type="cofactor">
    <cofactor evidence="1">
        <name>Mg(2+)</name>
        <dbReference type="ChEBI" id="CHEBI:18420"/>
    </cofactor>
    <text evidence="1">Binds 1 Mg(2+) ion per subunit.</text>
</comment>
<comment type="pathway">
    <text evidence="1">Cofactor biosynthesis; (R)-pantothenate biosynthesis; (R)-pantoate from 3-methyl-2-oxobutanoate: step 1/2.</text>
</comment>
<comment type="subunit">
    <text evidence="1">Homodecamer; pentamer of dimers.</text>
</comment>
<comment type="subcellular location">
    <subcellularLocation>
        <location evidence="1">Cytoplasm</location>
    </subcellularLocation>
</comment>
<comment type="similarity">
    <text evidence="1">Belongs to the PanB family.</text>
</comment>
<keyword id="KW-0963">Cytoplasm</keyword>
<keyword id="KW-0460">Magnesium</keyword>
<keyword id="KW-0479">Metal-binding</keyword>
<keyword id="KW-0566">Pantothenate biosynthesis</keyword>
<keyword id="KW-1185">Reference proteome</keyword>
<keyword id="KW-0808">Transferase</keyword>
<gene>
    <name evidence="1" type="primary">panB</name>
    <name type="ordered locus">GK2179</name>
</gene>
<proteinExistence type="inferred from homology"/>
<evidence type="ECO:0000255" key="1">
    <source>
        <dbReference type="HAMAP-Rule" id="MF_00156"/>
    </source>
</evidence>
<organism>
    <name type="scientific">Geobacillus kaustophilus (strain HTA426)</name>
    <dbReference type="NCBI Taxonomy" id="235909"/>
    <lineage>
        <taxon>Bacteria</taxon>
        <taxon>Bacillati</taxon>
        <taxon>Bacillota</taxon>
        <taxon>Bacilli</taxon>
        <taxon>Bacillales</taxon>
        <taxon>Anoxybacillaceae</taxon>
        <taxon>Geobacillus</taxon>
        <taxon>Geobacillus thermoleovorans group</taxon>
    </lineage>
</organism>
<accession>Q5KXX2</accession>
<feature type="chain" id="PRO_0000184847" description="3-methyl-2-oxobutanoate hydroxymethyltransferase">
    <location>
        <begin position="1"/>
        <end position="279"/>
    </location>
</feature>
<feature type="active site" description="Proton acceptor" evidence="1">
    <location>
        <position position="181"/>
    </location>
</feature>
<feature type="binding site" evidence="1">
    <location>
        <begin position="43"/>
        <end position="44"/>
    </location>
    <ligand>
        <name>3-methyl-2-oxobutanoate</name>
        <dbReference type="ChEBI" id="CHEBI:11851"/>
    </ligand>
</feature>
<feature type="binding site" evidence="1">
    <location>
        <position position="43"/>
    </location>
    <ligand>
        <name>Mg(2+)</name>
        <dbReference type="ChEBI" id="CHEBI:18420"/>
    </ligand>
</feature>
<feature type="binding site" evidence="1">
    <location>
        <position position="82"/>
    </location>
    <ligand>
        <name>3-methyl-2-oxobutanoate</name>
        <dbReference type="ChEBI" id="CHEBI:11851"/>
    </ligand>
</feature>
<feature type="binding site" evidence="1">
    <location>
        <position position="82"/>
    </location>
    <ligand>
        <name>Mg(2+)</name>
        <dbReference type="ChEBI" id="CHEBI:18420"/>
    </ligand>
</feature>
<feature type="binding site" evidence="1">
    <location>
        <position position="112"/>
    </location>
    <ligand>
        <name>3-methyl-2-oxobutanoate</name>
        <dbReference type="ChEBI" id="CHEBI:11851"/>
    </ligand>
</feature>
<feature type="binding site" evidence="1">
    <location>
        <position position="114"/>
    </location>
    <ligand>
        <name>Mg(2+)</name>
        <dbReference type="ChEBI" id="CHEBI:18420"/>
    </ligand>
</feature>
<name>PANB_GEOKA</name>
<sequence length="279" mass="29933">MKAKTDFFHMKQAGEPIVMVTAYDFPSAKLAEQAGVDMILVGDSLGMVVLGYDSTIPVTVDDMIHHTKAVRRGAPNTFIVTDMPFMSYHASKEEALQNARRIMQESGANAVKVEGADEVVDMIAALTKAGVPVVAHLGLTPQSVGVLGGYKVQGKDAESAKKLLDDAKQCEQAGAIALVLECVPKQLGAAMARELTIPVIGIGAGAEVDGQVLVYHDLLGYGVTRVPKFVKQYASIQETIVEALANYVADVKLRQFPEPAHTFTMKEEEWVALYGGKQG</sequence>
<reference key="1">
    <citation type="journal article" date="2004" name="Nucleic Acids Res.">
        <title>Thermoadaptation trait revealed by the genome sequence of thermophilic Geobacillus kaustophilus.</title>
        <authorList>
            <person name="Takami H."/>
            <person name="Takaki Y."/>
            <person name="Chee G.-J."/>
            <person name="Nishi S."/>
            <person name="Shimamura S."/>
            <person name="Suzuki H."/>
            <person name="Matsui S."/>
            <person name="Uchiyama I."/>
        </authorList>
    </citation>
    <scope>NUCLEOTIDE SEQUENCE [LARGE SCALE GENOMIC DNA]</scope>
    <source>
        <strain>HTA426</strain>
    </source>
</reference>
<dbReference type="EC" id="2.1.2.11" evidence="1"/>
<dbReference type="EMBL" id="BA000043">
    <property type="protein sequence ID" value="BAD76464.1"/>
    <property type="molecule type" value="Genomic_DNA"/>
</dbReference>
<dbReference type="RefSeq" id="WP_011231664.1">
    <property type="nucleotide sequence ID" value="NC_006510.1"/>
</dbReference>
<dbReference type="SMR" id="Q5KXX2"/>
<dbReference type="STRING" id="235909.GK2179"/>
<dbReference type="GeneID" id="32064030"/>
<dbReference type="KEGG" id="gka:GK2179"/>
<dbReference type="eggNOG" id="COG0413">
    <property type="taxonomic scope" value="Bacteria"/>
</dbReference>
<dbReference type="HOGENOM" id="CLU_036645_1_0_9"/>
<dbReference type="UniPathway" id="UPA00028">
    <property type="reaction ID" value="UER00003"/>
</dbReference>
<dbReference type="Proteomes" id="UP000001172">
    <property type="component" value="Chromosome"/>
</dbReference>
<dbReference type="GO" id="GO:0005737">
    <property type="term" value="C:cytoplasm"/>
    <property type="evidence" value="ECO:0007669"/>
    <property type="project" value="UniProtKB-SubCell"/>
</dbReference>
<dbReference type="GO" id="GO:0003864">
    <property type="term" value="F:3-methyl-2-oxobutanoate hydroxymethyltransferase activity"/>
    <property type="evidence" value="ECO:0007669"/>
    <property type="project" value="UniProtKB-UniRule"/>
</dbReference>
<dbReference type="GO" id="GO:0000287">
    <property type="term" value="F:magnesium ion binding"/>
    <property type="evidence" value="ECO:0007669"/>
    <property type="project" value="TreeGrafter"/>
</dbReference>
<dbReference type="GO" id="GO:0015940">
    <property type="term" value="P:pantothenate biosynthetic process"/>
    <property type="evidence" value="ECO:0007669"/>
    <property type="project" value="UniProtKB-UniRule"/>
</dbReference>
<dbReference type="CDD" id="cd06557">
    <property type="entry name" value="KPHMT-like"/>
    <property type="match status" value="1"/>
</dbReference>
<dbReference type="FunFam" id="3.20.20.60:FF:000003">
    <property type="entry name" value="3-methyl-2-oxobutanoate hydroxymethyltransferase"/>
    <property type="match status" value="1"/>
</dbReference>
<dbReference type="Gene3D" id="3.20.20.60">
    <property type="entry name" value="Phosphoenolpyruvate-binding domains"/>
    <property type="match status" value="1"/>
</dbReference>
<dbReference type="HAMAP" id="MF_00156">
    <property type="entry name" value="PanB"/>
    <property type="match status" value="1"/>
</dbReference>
<dbReference type="InterPro" id="IPR003700">
    <property type="entry name" value="Pantoate_hydroxy_MeTrfase"/>
</dbReference>
<dbReference type="InterPro" id="IPR015813">
    <property type="entry name" value="Pyrv/PenolPyrv_kinase-like_dom"/>
</dbReference>
<dbReference type="InterPro" id="IPR040442">
    <property type="entry name" value="Pyrv_kinase-like_dom_sf"/>
</dbReference>
<dbReference type="NCBIfam" id="TIGR00222">
    <property type="entry name" value="panB"/>
    <property type="match status" value="1"/>
</dbReference>
<dbReference type="NCBIfam" id="NF001452">
    <property type="entry name" value="PRK00311.1"/>
    <property type="match status" value="1"/>
</dbReference>
<dbReference type="PANTHER" id="PTHR20881">
    <property type="entry name" value="3-METHYL-2-OXOBUTANOATE HYDROXYMETHYLTRANSFERASE"/>
    <property type="match status" value="1"/>
</dbReference>
<dbReference type="PANTHER" id="PTHR20881:SF0">
    <property type="entry name" value="3-METHYL-2-OXOBUTANOATE HYDROXYMETHYLTRANSFERASE"/>
    <property type="match status" value="1"/>
</dbReference>
<dbReference type="Pfam" id="PF02548">
    <property type="entry name" value="Pantoate_transf"/>
    <property type="match status" value="1"/>
</dbReference>
<dbReference type="PIRSF" id="PIRSF000388">
    <property type="entry name" value="Pantoate_hydroxy_MeTrfase"/>
    <property type="match status" value="1"/>
</dbReference>
<dbReference type="SUPFAM" id="SSF51621">
    <property type="entry name" value="Phosphoenolpyruvate/pyruvate domain"/>
    <property type="match status" value="1"/>
</dbReference>
<protein>
    <recommendedName>
        <fullName evidence="1">3-methyl-2-oxobutanoate hydroxymethyltransferase</fullName>
        <ecNumber evidence="1">2.1.2.11</ecNumber>
    </recommendedName>
    <alternativeName>
        <fullName evidence="1">Ketopantoate hydroxymethyltransferase</fullName>
        <shortName evidence="1">KPHMT</shortName>
    </alternativeName>
</protein>